<feature type="signal peptide" evidence="1">
    <location>
        <begin position="1"/>
        <end position="22"/>
    </location>
</feature>
<feature type="chain" id="PRO_5004328144" description="Phosphorylcholine phosphatase">
    <location>
        <begin position="23"/>
        <end position="349"/>
    </location>
</feature>
<feature type="active site" description="Nucleophile" evidence="19">
    <location>
        <position position="53"/>
    </location>
</feature>
<feature type="active site" description="Proton donor" evidence="19">
    <location>
        <position position="55"/>
    </location>
</feature>
<feature type="binding site" evidence="14 21 22">
    <location>
        <position position="53"/>
    </location>
    <ligand>
        <name>Mg(2+)</name>
        <dbReference type="ChEBI" id="CHEBI:18420"/>
    </ligand>
</feature>
<feature type="binding site" evidence="14 21 22">
    <location>
        <position position="55"/>
    </location>
    <ligand>
        <name>Mg(2+)</name>
        <dbReference type="ChEBI" id="CHEBI:18420"/>
    </ligand>
</feature>
<feature type="binding site" evidence="14 21 22">
    <location>
        <position position="284"/>
    </location>
    <ligand>
        <name>Mg(2+)</name>
        <dbReference type="ChEBI" id="CHEBI:18420"/>
    </ligand>
</feature>
<feature type="disulfide bond" evidence="7 14 21 22">
    <location>
        <begin position="109"/>
        <end position="116"/>
    </location>
</feature>
<feature type="mutagenesis site" description="Loss of activity." evidence="4">
    <original>DMDNT</original>
    <variation>AMANA</variation>
    <location>
        <begin position="53"/>
        <end position="57"/>
    </location>
</feature>
<feature type="mutagenesis site" description="Loss of activity." evidence="4">
    <original>DMDNT</original>
    <variation>EMENS</variation>
    <location>
        <begin position="53"/>
        <end position="57"/>
    </location>
</feature>
<feature type="mutagenesis site" description="Loss of activity." evidence="4 5">
    <original>D</original>
    <variation>E</variation>
    <location>
        <position position="53"/>
    </location>
</feature>
<feature type="mutagenesis site" description="Loss of activity." evidence="4 5">
    <original>D</original>
    <variation>E</variation>
    <location>
        <position position="55"/>
    </location>
</feature>
<feature type="mutagenesis site" description="Retains low activity with phosphorylcholine and pNPP as substrates. Still activated by Mg(2+), Zn(2+) or Cu(2+). Slight decrease in inhibition by tetramethylammonium chloride." evidence="4 5 14">
    <original>T</original>
    <variation>S</variation>
    <location>
        <position position="57"/>
    </location>
</feature>
<feature type="mutagenesis site" description="Shows half of the catalytic efficiency with pNPP as substrate. Increases specific activity with phosphorylcholine, but shows a 2-fold decrease in catalytic efficiency. Decreases inhibition by high concentrations of phosphorylcholine. 3-fold decrease in inhibition by tetramethylammonium chloride." evidence="12 14">
    <original>E</original>
    <variation>A</variation>
    <location>
        <position position="64"/>
    </location>
</feature>
<feature type="mutagenesis site" description="2.5-fold increase of the catalytic efficiency with pNPP as substrate. Decreases catalytic efficiency with phosphorylcholine. Insensitive to inhibition by high concentrations of phosphorylcholine. 5-fold decrease in inhibition by tetramethylammonium chloride." evidence="12 14">
    <original>E</original>
    <variation>A</variation>
    <location>
        <position position="65"/>
    </location>
</feature>
<feature type="mutagenesis site" description="Low catalytic efficiency with pNPP and phosphorylcholine as substrates. Decreases inhibition by high concentrations of phosphorylcholine. 4-fold decrease in inhibition by tetramethylammonium chloride." evidence="12 14">
    <original>YYY</original>
    <variation>AAA</variation>
    <location>
        <begin position="104"/>
        <end position="106"/>
    </location>
</feature>
<feature type="mutagenesis site" description="Slight decrease in inhibition by tetramethylammonium chloride." evidence="14">
    <original>C</original>
    <variation>A</variation>
    <location>
        <position position="109"/>
    </location>
</feature>
<feature type="mutagenesis site" description="Strong decrease in activity with phosphorylcholine and pNPP as substrates. Still activated by Mg(2+), Zn(2+) or Cu(2+). Slight decrease in inhibition by tetramethylammonium chloride." evidence="4 5 14">
    <original>S</original>
    <variation>T</variation>
    <location>
        <position position="188"/>
    </location>
</feature>
<feature type="mutagenesis site" description="Loss of activity." evidence="4">
    <original>K</original>
    <variation>Q</variation>
    <location>
        <position position="264"/>
    </location>
</feature>
<feature type="mutagenesis site" description="Almost no change in activity. Slight decrease in inhibition by tetramethylammonium chloride." evidence="4 14">
    <original>K</original>
    <variation>R</variation>
    <location>
        <position position="264"/>
    </location>
</feature>
<feature type="mutagenesis site" description="Decrease in activity with phosphorylcholine and pNPP as substrates. Slight decrease in inhibition by tetramethylammonium chloride." evidence="4 14">
    <original>G</original>
    <variation>A</variation>
    <location>
        <position position="283"/>
    </location>
</feature>
<feature type="mutagenesis site" description="Strong decrease in activity with phosphorylcholine and pNPP as substrates. Still activated by Mg(2+), Zn(2+) or Cu(2+). Slight decrease in inhibition by tetramethylammonium chloride." evidence="4 5 14">
    <original>D</original>
    <variation>E</variation>
    <location>
        <position position="284"/>
    </location>
</feature>
<feature type="mutagenesis site" description="Retains 65-70% of activity." evidence="4">
    <original>D</original>
    <variation>E</variation>
    <location>
        <position position="287"/>
    </location>
</feature>
<feature type="mutagenesis site" description="Retains 3% of activity. Still activated by Mg(2+), Zn(2+) or Cu(2+). Slight decrease in inhibition by tetramethylammonium chloride." evidence="4 5 14">
    <original>D</original>
    <variation>E</variation>
    <location>
        <position position="289"/>
    </location>
</feature>
<feature type="helix" evidence="23">
    <location>
        <begin position="30"/>
        <end position="43"/>
    </location>
</feature>
<feature type="strand" evidence="23">
    <location>
        <begin position="49"/>
        <end position="52"/>
    </location>
</feature>
<feature type="turn" evidence="23">
    <location>
        <begin position="55"/>
        <end position="57"/>
    </location>
</feature>
<feature type="strand" evidence="23">
    <location>
        <begin position="58"/>
        <end position="61"/>
    </location>
</feature>
<feature type="helix" evidence="23">
    <location>
        <begin position="63"/>
        <end position="73"/>
    </location>
</feature>
<feature type="turn" evidence="23">
    <location>
        <begin position="79"/>
        <end position="81"/>
    </location>
</feature>
<feature type="helix" evidence="23">
    <location>
        <begin position="84"/>
        <end position="86"/>
    </location>
</feature>
<feature type="helix" evidence="23">
    <location>
        <begin position="101"/>
        <end position="111"/>
    </location>
</feature>
<feature type="helix" evidence="23">
    <location>
        <begin position="113"/>
        <end position="122"/>
    </location>
</feature>
<feature type="turn" evidence="23">
    <location>
        <begin position="123"/>
        <end position="126"/>
    </location>
</feature>
<feature type="helix" evidence="23">
    <location>
        <begin position="129"/>
        <end position="142"/>
    </location>
</feature>
<feature type="strand" evidence="23">
    <location>
        <begin position="146"/>
        <end position="152"/>
    </location>
</feature>
<feature type="strand" evidence="23">
    <location>
        <begin position="155"/>
        <end position="161"/>
    </location>
</feature>
<feature type="helix" evidence="23">
    <location>
        <begin position="168"/>
        <end position="179"/>
    </location>
</feature>
<feature type="strand" evidence="23">
    <location>
        <begin position="183"/>
        <end position="191"/>
    </location>
</feature>
<feature type="helix" evidence="23">
    <location>
        <begin position="192"/>
        <end position="199"/>
    </location>
</feature>
<feature type="helix" evidence="23">
    <location>
        <begin position="202"/>
        <end position="204"/>
    </location>
</feature>
<feature type="helix" evidence="23">
    <location>
        <begin position="210"/>
        <end position="212"/>
    </location>
</feature>
<feature type="strand" evidence="23">
    <location>
        <begin position="213"/>
        <end position="216"/>
    </location>
</feature>
<feature type="strand" evidence="23">
    <location>
        <begin position="218"/>
        <end position="221"/>
    </location>
</feature>
<feature type="turn" evidence="23">
    <location>
        <begin position="223"/>
        <end position="225"/>
    </location>
</feature>
<feature type="helix" evidence="23">
    <location>
        <begin position="231"/>
        <end position="236"/>
    </location>
</feature>
<feature type="helix" evidence="23">
    <location>
        <begin position="242"/>
        <end position="245"/>
    </location>
</feature>
<feature type="strand" evidence="23">
    <location>
        <begin position="249"/>
        <end position="254"/>
    </location>
</feature>
<feature type="helix" evidence="23">
    <location>
        <begin position="262"/>
        <end position="271"/>
    </location>
</feature>
<feature type="strand" evidence="23">
    <location>
        <begin position="279"/>
        <end position="284"/>
    </location>
</feature>
<feature type="helix" evidence="23">
    <location>
        <begin position="286"/>
        <end position="295"/>
    </location>
</feature>
<feature type="strand" evidence="23">
    <location>
        <begin position="302"/>
        <end position="306"/>
    </location>
</feature>
<feature type="helix" evidence="23">
    <location>
        <begin position="310"/>
        <end position="328"/>
    </location>
</feature>
<feature type="turn" evidence="23">
    <location>
        <begin position="329"/>
        <end position="331"/>
    </location>
</feature>
<feature type="strand" evidence="23">
    <location>
        <begin position="338"/>
        <end position="343"/>
    </location>
</feature>
<feature type="helix" evidence="23">
    <location>
        <begin position="345"/>
        <end position="348"/>
    </location>
</feature>
<comment type="function">
    <text evidence="2 3 4 11">Catalyzes the hydrolysis of phosphorylcholine (PCho) to produce choline and inorganic phosphate (PubMed:10387109, PubMed:15886911, PubMed:17106798, PubMed:2116592). Can also hydrolyze phosphorylethanolamine and the nonphysiological substrate p-nitrophenylphosphate (pNPP) (PubMed:10387109, PubMed:15886911, PubMed:17106798, PubMed:2116592). Shows higher affinity and catalytic efficiency with phosphorylcholine as substrate (PubMed:2116592).</text>
</comment>
<comment type="function">
    <text evidence="6 15">Is probably involved in virulence (PubMed:19103776, Ref.3). The bacteria may break down various host compounds or host cell membranes through the coordinated action of phospholipase C and phosphocholine phosphatase. The final consequence of the action of these enzymes is an increase of the free choline concentration, which may promote the pathogenicity of P.aeruginosa (Ref.3).</text>
</comment>
<comment type="catalytic activity">
    <reaction evidence="2 3 4 11">
        <text>phosphocholine + H2O = choline + phosphate</text>
        <dbReference type="Rhea" id="RHEA:10492"/>
        <dbReference type="ChEBI" id="CHEBI:15354"/>
        <dbReference type="ChEBI" id="CHEBI:15377"/>
        <dbReference type="ChEBI" id="CHEBI:43474"/>
        <dbReference type="ChEBI" id="CHEBI:295975"/>
        <dbReference type="EC" id="3.1.3.75"/>
    </reaction>
</comment>
<comment type="catalytic activity">
    <reaction evidence="2 3 11">
        <text>phosphoethanolamine + H2O = ethanolamine + phosphate</text>
        <dbReference type="Rhea" id="RHEA:16089"/>
        <dbReference type="ChEBI" id="CHEBI:15377"/>
        <dbReference type="ChEBI" id="CHEBI:43474"/>
        <dbReference type="ChEBI" id="CHEBI:57603"/>
        <dbReference type="ChEBI" id="CHEBI:58190"/>
        <dbReference type="EC" id="3.1.3.75"/>
    </reaction>
</comment>
<comment type="cofactor">
    <cofactor evidence="2 5 8 14">
        <name>Mg(2+)</name>
        <dbReference type="ChEBI" id="CHEBI:18420"/>
    </cofactor>
    <text evidence="2 5 8">At pH 5.0 Mg(2+), Zn(2+) or Cu(2+) is required for maximal activity (PubMed:10387109, PubMed:18801468). Mg2(+) shows low affinity with respect to Zn(2+) as a cofactor, but it is probably the preferred cation due to its abundance and its ability to work in a broad range of pH conditions (PubMed:20135339).</text>
</comment>
<comment type="activity regulation">
    <text evidence="2 3 8 11 12 13">Activity is inhibited by high concentrations of phosphorylcholine, phosphorylethanolamine, choline or betaine (PubMed:15886911, PubMed:2116592, PubMed:21515416). Displays different properties depending on the substrate utilized, the pH conditions as well as the presence or absence of metal ions (PubMed:10387109, PubMed:21660097). At pH 5, activity is inhibited by Al(3+) ions. At pH 7.4, the enzyme cannot catalyze the hydrolysis of pNPP, phosphorylethanolamine is a poor substrate in either the presence or absence of divalent cations, and activity measured with phosphorylcholine is independent of divalent cations or is not inhibited by Al(3+) ions (PubMed:10387109). Mg(2+) produces identical activation at pH 5.0 and 7.4, but Zn(2+) is an activator at pH 5.0 and becomes an inhibitor at pH 7.4 (PubMed:20135339). This inhibition at pH 7.4 may be due to a transition from octahedral to tetrahedral coordination geometry, which is produced by hydrolysis of the Zn-hexacoordinated complex (PubMed:20135339).</text>
</comment>
<comment type="biophysicochemical properties">
    <kinetics>
        <KM evidence="11">0.2 mM for phosphocholine</KM>
        <KM evidence="4">0.03 mM for phosphocholine (at pH 5.0 or 7.4, high affinity site, without signal peptide)</KM>
        <KM evidence="4">0.05 mM for phosphocholine (at pH 5.0 or 7.4, high affinity site, with signal peptide)</KM>
        <KM evidence="4">0.5 mM for phosphocholine (at pH 5.0 or 7.4, low affinity site, without signal peptide)</KM>
        <KM evidence="4">3.6 mM for phosphocholine (at pH 5.0, low affinity site, with signal peptide)</KM>
        <KM evidence="4">3.5 mM for phosphocholine (at pH 7.4, low affinity site, with signal peptide)</KM>
        <KM evidence="11">0.7 mM for phosphoethanolamine</KM>
        <KM evidence="11">2 mM for pNPP</KM>
        <KM evidence="4">2 mM for pNPP (at pH 5.0, with ou without signal peptide)</KM>
        <KM evidence="5">3.2 mM for pNPP (at pH 5.0, in the presence of Mg(2+))</KM>
        <KM evidence="5">3.5 mM for pNPP (at pH 5.0, in the presence of Zn(2+))</KM>
        <KM evidence="5">12.2 mM for pNPP (at pH 5.0, in the presence of Cu(2+))</KM>
        <Vmax evidence="11">1250.0 nmol/min/mg enzyme with phosphocholine as substrate</Vmax>
        <Vmax evidence="11">1390.0 nmol/min/mg enzyme with phosphoethanolamine as substrate</Vmax>
        <Vmax evidence="11">950.0 nmol/min/mg enzyme with pNPP as substrate</Vmax>
        <Vmax evidence="5">130.0 umol/min/mg enzyme with pNPP as substrate (at pH 5.0, in the presence of Mg(2+))</Vmax>
        <Vmax evidence="5">230.0 umol/min/mg enzyme with pNPP as substrate (at pH 5.0, in the presence of Zn(2+))</Vmax>
        <Vmax evidence="5">330.0 umol/min/mg enzyme with pNPP as substrate (at pH 5.0, in the presence of Cu(2+))</Vmax>
    </kinetics>
    <phDependence>
        <text evidence="2">Optimum pH is dependent on the substrate: optimum pH is 5-8 with phosphorylcholine, 6 with phosphorylethanolamine and 5 with pNPP.</text>
    </phDependence>
</comment>
<comment type="subunit">
    <text evidence="2 3 7 9 14">Monomer (PubMed:10387109, PubMed:15886911). Homodimer (PubMed:20064618, PubMed:20693680, PubMed:22922065). Homotetramer (PubMed:20693680).</text>
</comment>
<comment type="subcellular location">
    <subcellularLocation>
        <location evidence="2 11">Periplasm</location>
    </subcellularLocation>
</comment>
<comment type="induction">
    <text evidence="6 10 11">Induced in the presence of choline, betaine, glycine betaine or dimethylglycine (PubMed:19103776, PubMed:20869215, PubMed:2116592). Induction is mediated by the transcriptional regulator GbdR (PubMed:19103776, PubMed:20869215). The nitrogen regulatory protein NtrC is necessary for full pchP expression (PubMed:20869215). Expression is also partially dependent on the sigma-54 factor (PubMed:20869215). Induced via GbdR in bovine lung surfactant and mouse BALF (PubMed:19103776).</text>
</comment>
<comment type="domain">
    <text evidence="2 3 4 12 13 14">Folds into three structural domains: the first domain harbors all the residues involved in catalysis, the second domain is characteristic of PchP and is involved in the recognition of the choline moiety of the substrate, the third domain stabilizes the relative position of the other two (PubMed:22922065). Contains two sites for alkylammonium compounds: one catalytic site near the metal ion-phosphoester pocket and one inhibitory site (PubMed:21515416, PubMed:21660097, PubMed:22922065). Sites are adjacent and share residues (PubMed:21515416). Contains a high and a low affinity site for phosphorylcholine (PubMed:10387109, PubMed:15886911). The signal peptide is the fundamental factor responsible for decreasing the affinity of the second site, and catalytic efficiency increases notably after cleavage of the signal peptide (PubMed:17106798).</text>
</comment>
<comment type="similarity">
    <text evidence="18">Belongs to the HAD-like hydrolase superfamily.</text>
</comment>
<dbReference type="EC" id="3.1.3.75" evidence="2 3 4 11"/>
<dbReference type="EMBL" id="AE004091">
    <property type="protein sequence ID" value="AAG08677.1"/>
    <property type="molecule type" value="Genomic_DNA"/>
</dbReference>
<dbReference type="PIR" id="H82985">
    <property type="entry name" value="H82985"/>
</dbReference>
<dbReference type="RefSeq" id="NP_253979.1">
    <property type="nucleotide sequence ID" value="NC_002516.2"/>
</dbReference>
<dbReference type="RefSeq" id="WP_003110458.1">
    <property type="nucleotide sequence ID" value="NZ_QZGE01000020.1"/>
</dbReference>
<dbReference type="PDB" id="4AS2">
    <property type="method" value="X-ray"/>
    <property type="resolution" value="2.12 A"/>
    <property type="chains" value="A/B/C/D=23-349"/>
</dbReference>
<dbReference type="PDB" id="4AS3">
    <property type="method" value="X-ray"/>
    <property type="resolution" value="2.40 A"/>
    <property type="chains" value="A/B/C/D=23-349"/>
</dbReference>
<dbReference type="PDBsum" id="4AS2"/>
<dbReference type="PDBsum" id="4AS3"/>
<dbReference type="SMR" id="Q9HTR2"/>
<dbReference type="STRING" id="208964.PA5292"/>
<dbReference type="PaxDb" id="208964-PA5292"/>
<dbReference type="DNASU" id="877730"/>
<dbReference type="GeneID" id="877730"/>
<dbReference type="KEGG" id="pae:PA5292"/>
<dbReference type="PATRIC" id="fig|208964.12.peg.5546"/>
<dbReference type="PseudoCAP" id="PA5292"/>
<dbReference type="HOGENOM" id="CLU_062627_0_0_6"/>
<dbReference type="InParanoid" id="Q9HTR2"/>
<dbReference type="OrthoDB" id="1633110at2"/>
<dbReference type="PhylomeDB" id="Q9HTR2"/>
<dbReference type="BioCyc" id="PAER208964:G1FZ6-5413-MONOMER"/>
<dbReference type="BRENDA" id="3.1.3.75">
    <property type="organism ID" value="5087"/>
</dbReference>
<dbReference type="EvolutionaryTrace" id="Q9HTR2"/>
<dbReference type="Proteomes" id="UP000002438">
    <property type="component" value="Chromosome"/>
</dbReference>
<dbReference type="GO" id="GO:0042597">
    <property type="term" value="C:periplasmic space"/>
    <property type="evidence" value="ECO:0007669"/>
    <property type="project" value="UniProtKB-SubCell"/>
</dbReference>
<dbReference type="GO" id="GO:0016787">
    <property type="term" value="F:hydrolase activity"/>
    <property type="evidence" value="ECO:0007669"/>
    <property type="project" value="UniProtKB-KW"/>
</dbReference>
<dbReference type="GO" id="GO:0046872">
    <property type="term" value="F:metal ion binding"/>
    <property type="evidence" value="ECO:0007669"/>
    <property type="project" value="UniProtKB-KW"/>
</dbReference>
<dbReference type="Gene3D" id="1.20.1440.310">
    <property type="match status" value="1"/>
</dbReference>
<dbReference type="Gene3D" id="3.40.50.1000">
    <property type="entry name" value="HAD superfamily/HAD-like"/>
    <property type="match status" value="1"/>
</dbReference>
<dbReference type="InterPro" id="IPR050582">
    <property type="entry name" value="HAD-like_SerB"/>
</dbReference>
<dbReference type="InterPro" id="IPR036412">
    <property type="entry name" value="HAD-like_sf"/>
</dbReference>
<dbReference type="InterPro" id="IPR023214">
    <property type="entry name" value="HAD_sf"/>
</dbReference>
<dbReference type="PANTHER" id="PTHR43344:SF13">
    <property type="entry name" value="PHOSPHATASE RV3661-RELATED"/>
    <property type="match status" value="1"/>
</dbReference>
<dbReference type="PANTHER" id="PTHR43344">
    <property type="entry name" value="PHOSPHOSERINE PHOSPHATASE"/>
    <property type="match status" value="1"/>
</dbReference>
<dbReference type="SUPFAM" id="SSF56784">
    <property type="entry name" value="HAD-like"/>
    <property type="match status" value="1"/>
</dbReference>
<gene>
    <name evidence="16" type="primary">pchP</name>
    <name evidence="20" type="ordered locus">PA5292</name>
</gene>
<name>PCHP_PSEAE</name>
<protein>
    <recommendedName>
        <fullName evidence="17">Phosphorylcholine phosphatase</fullName>
        <shortName evidence="16">PChP</shortName>
        <ecNumber evidence="2 3 4 11">3.1.3.75</ecNumber>
    </recommendedName>
    <alternativeName>
        <fullName evidence="18">Phosphoethanolamine/phosphocholine phosphatase</fullName>
    </alternativeName>
</protein>
<accession>Q9HTR2</accession>
<evidence type="ECO:0000255" key="1"/>
<evidence type="ECO:0000269" key="2">
    <source>
    </source>
</evidence>
<evidence type="ECO:0000269" key="3">
    <source>
    </source>
</evidence>
<evidence type="ECO:0000269" key="4">
    <source>
    </source>
</evidence>
<evidence type="ECO:0000269" key="5">
    <source>
    </source>
</evidence>
<evidence type="ECO:0000269" key="6">
    <source>
    </source>
</evidence>
<evidence type="ECO:0000269" key="7">
    <source>
    </source>
</evidence>
<evidence type="ECO:0000269" key="8">
    <source>
    </source>
</evidence>
<evidence type="ECO:0000269" key="9">
    <source>
    </source>
</evidence>
<evidence type="ECO:0000269" key="10">
    <source>
    </source>
</evidence>
<evidence type="ECO:0000269" key="11">
    <source>
    </source>
</evidence>
<evidence type="ECO:0000269" key="12">
    <source>
    </source>
</evidence>
<evidence type="ECO:0000269" key="13">
    <source>
    </source>
</evidence>
<evidence type="ECO:0000269" key="14">
    <source>
    </source>
</evidence>
<evidence type="ECO:0000269" key="15">
    <source ref="3"/>
</evidence>
<evidence type="ECO:0000303" key="16">
    <source>
    </source>
</evidence>
<evidence type="ECO:0000303" key="17">
    <source>
    </source>
</evidence>
<evidence type="ECO:0000305" key="18"/>
<evidence type="ECO:0000305" key="19">
    <source>
    </source>
</evidence>
<evidence type="ECO:0000312" key="20">
    <source>
        <dbReference type="EMBL" id="AAG08677.1"/>
    </source>
</evidence>
<evidence type="ECO:0007744" key="21">
    <source>
        <dbReference type="PDB" id="4AS2"/>
    </source>
</evidence>
<evidence type="ECO:0007744" key="22">
    <source>
        <dbReference type="PDB" id="4AS3"/>
    </source>
</evidence>
<evidence type="ECO:0007829" key="23">
    <source>
        <dbReference type="PDB" id="4AS2"/>
    </source>
</evidence>
<organism>
    <name type="scientific">Pseudomonas aeruginosa (strain ATCC 15692 / DSM 22644 / CIP 104116 / JCM 14847 / LMG 12228 / 1C / PRS 101 / PAO1)</name>
    <dbReference type="NCBI Taxonomy" id="208964"/>
    <lineage>
        <taxon>Bacteria</taxon>
        <taxon>Pseudomonadati</taxon>
        <taxon>Pseudomonadota</taxon>
        <taxon>Gammaproteobacteria</taxon>
        <taxon>Pseudomonadales</taxon>
        <taxon>Pseudomonadaceae</taxon>
        <taxon>Pseudomonas</taxon>
    </lineage>
</organism>
<reference key="1">
    <citation type="journal article" date="2000" name="Nature">
        <title>Complete genome sequence of Pseudomonas aeruginosa PAO1, an opportunistic pathogen.</title>
        <authorList>
            <person name="Stover C.K."/>
            <person name="Pham X.-Q.T."/>
            <person name="Erwin A.L."/>
            <person name="Mizoguchi S.D."/>
            <person name="Warrener P."/>
            <person name="Hickey M.J."/>
            <person name="Brinkman F.S.L."/>
            <person name="Hufnagle W.O."/>
            <person name="Kowalik D.J."/>
            <person name="Lagrou M."/>
            <person name="Garber R.L."/>
            <person name="Goltry L."/>
            <person name="Tolentino E."/>
            <person name="Westbrock-Wadman S."/>
            <person name="Yuan Y."/>
            <person name="Brody L.L."/>
            <person name="Coulter S.N."/>
            <person name="Folger K.R."/>
            <person name="Kas A."/>
            <person name="Larbig K."/>
            <person name="Lim R.M."/>
            <person name="Smith K.A."/>
            <person name="Spencer D.H."/>
            <person name="Wong G.K.-S."/>
            <person name="Wu Z."/>
            <person name="Paulsen I.T."/>
            <person name="Reizer J."/>
            <person name="Saier M.H. Jr."/>
            <person name="Hancock R.E.W."/>
            <person name="Lory S."/>
            <person name="Olson M.V."/>
        </authorList>
    </citation>
    <scope>NUCLEOTIDE SEQUENCE [LARGE SCALE GENOMIC DNA]</scope>
    <source>
        <strain>ATCC 15692 / DSM 22644 / CIP 104116 / JCM 14847 / LMG 12228 / 1C / PRS 101 / PAO1</strain>
    </source>
</reference>
<reference key="2">
    <citation type="journal article" date="1990" name="Mol. Cell. Biochem.">
        <title>Identification of the Pseudomonas aeruginosa acid phosphatase as a phosphorylcholine phosphatase activity.</title>
        <authorList>
            <person name="Garrido M.N."/>
            <person name="Lisa T.A."/>
            <person name="Albelo S."/>
            <person name="Lucchesi G.I."/>
            <person name="Domenech C.E."/>
        </authorList>
    </citation>
    <scope>FUNCTION</scope>
    <scope>CATALYTIC ACTIVITY</scope>
    <scope>ACTIVITY REGULATION</scope>
    <scope>BIOPHYSICOCHEMICAL PROPERTIES</scope>
    <scope>SUBCELLULAR LOCATION</scope>
    <scope>INDUCTION</scope>
</reference>
<reference key="3">
    <citation type="journal article" date="1994" name="Curr. Microbiol.">
        <title>Pathogenicity of Pseudomonas aeruginosa and its relationship to the choline metabolism through the action of cholinesterase, acid phosphatase, and phospholipase C.</title>
        <authorList>
            <person name="Lisa T.A."/>
            <person name="Lucchesi G.I."/>
            <person name="Domenech C.E."/>
        </authorList>
    </citation>
    <scope>FUNCTION IN VIRULENCE</scope>
</reference>
<reference key="4">
    <citation type="journal article" date="1999" name="Curr. Microbiol.">
        <title>Kinetic properties of purified Pseudomonas aeruginosa phosphorylcholine phosphatase indicated that this enzyme may be utilized by the bacteria to colonize in different environments.</title>
        <authorList>
            <person name="Salvano M.A."/>
            <person name="Domenech C.E."/>
        </authorList>
    </citation>
    <scope>FUNCTION</scope>
    <scope>CATALYTIC ACTIVITY</scope>
    <scope>COFACTOR</scope>
    <scope>ACTIVITY REGULATION</scope>
    <scope>BIOPHYSICOCHEMICAL PROPERTIES</scope>
    <scope>SUBUNIT</scope>
    <scope>SUBCELLULAR LOCATION</scope>
    <scope>DOMAIN</scope>
</reference>
<reference key="5">
    <citation type="journal article" date="2005" name="Curr. Microbiol.">
        <title>Identification, cloning, and expression of Pseudomonas aeruginosa phosphorylcholine phosphatase gene.</title>
        <authorList>
            <person name="Massimelli M.J."/>
            <person name="Beassoni P.R."/>
            <person name="Forrellad M.A."/>
            <person name="Barra J.L."/>
            <person name="Garrido M.N."/>
            <person name="Domenech C.E."/>
            <person name="Lisa A.T."/>
        </authorList>
    </citation>
    <scope>FUNCTION</scope>
    <scope>CATALYTIC ACTIVITY</scope>
    <scope>ACTIVITY REGULATION</scope>
    <scope>SUBUNIT</scope>
    <scope>DOMAIN</scope>
    <source>
        <strain>ATCC 15692 / DSM 22644 / CIP 104116 / JCM 14847 / LMG 12228 / 1C / PRS 101 / PAO1</strain>
    </source>
</reference>
<reference key="6">
    <citation type="journal article" date="2006" name="Curr. Microbiol.">
        <title>Critical active-site residues identified by site-directed mutagenesis in Pseudomonas aeruginosa phosphorylcholine phosphatase, a new member of the haloacid dehalogenases hydrolase superfamily.</title>
        <authorList>
            <person name="Beassoni P.R."/>
            <person name="Otero L.H."/>
            <person name="Massimelli M.J."/>
            <person name="Lisa A.T."/>
            <person name="Domenech C.E."/>
        </authorList>
    </citation>
    <scope>FUNCTION</scope>
    <scope>CATALYTIC ACTIVITY</scope>
    <scope>BIOPHYSICOCHEMICAL PROPERTIES</scope>
    <scope>DOMAIN</scope>
    <scope>MUTAGENESIS OF 53-ASP--THR-57; ASP-53; ASP-55; THR-57; SER-188; LYS-264; GLY-283; ASP-284; ASP-287 AND ASP-289</scope>
</reference>
<reference key="7">
    <citation type="journal article" date="2008" name="Biochim. Biophys. Acta">
        <title>Using a molecular model and kinetic experiments in the presence of divalent cations to study the active site and catalysis of Pseudomonas aeruginosa phosphorylcholine phosphatase.</title>
        <authorList>
            <person name="Beassoni P.R."/>
            <person name="Otero L.H."/>
            <person name="Lisa A.T."/>
            <person name="Domenech C.E."/>
        </authorList>
    </citation>
    <scope>COFACTOR</scope>
    <scope>BIOPHYSICOCHEMICAL PROPERTIES</scope>
    <scope>MUTAGENESIS OF ASP-53; ASP-55; THR-57; SER-188; ASP-284 AND ASP-289</scope>
    <scope>ACTIVE SITE</scope>
</reference>
<reference key="8">
    <citation type="journal article" date="2009" name="Infect. Immun.">
        <title>GbdR regulates Pseudomonas aeruginosa plcH and pchP transcription in response to choline catabolites.</title>
        <authorList>
            <person name="Wargo M.J."/>
            <person name="Ho T.C."/>
            <person name="Gross M.J."/>
            <person name="Whittaker L.A."/>
            <person name="Hogan D.A."/>
        </authorList>
    </citation>
    <scope>FUNCTION IN VIRULENCE</scope>
    <scope>INDUCTION</scope>
    <source>
        <strain>ATCC 15692 / DSM 22644 / CIP 104116 / JCM 14847 / LMG 12228 / 1C / PRS 101 / PAO1</strain>
    </source>
</reference>
<reference key="9">
    <citation type="journal article" date="2010" name="Protein Expr. Purif.">
        <title>Preparation and biophysical characterization of recombinant Pseudomonas aeruginosa phosphorylcholine phosphatase.</title>
        <authorList>
            <person name="Beassoni P.R."/>
            <person name="Berti F.P."/>
            <person name="Otero L.H."/>
            <person name="Risso V.A."/>
            <person name="Ferreyra R.G."/>
            <person name="Lisa A.T."/>
            <person name="Domenech C.E."/>
            <person name="Ermacora M.R."/>
        </authorList>
    </citation>
    <scope>EXPRESSION</scope>
    <scope>SUBUNIT</scope>
    <scope>DISULFIDE BOND</scope>
    <scope>PRELIMINARY CRYSTALLIZATION</scope>
</reference>
<reference key="10">
    <citation type="journal article" date="2010" name="BioMetals">
        <title>Transition from octahedral to tetrahedral geometry causes the activation or inhibition by Znf2+ of Pseudomonas aeruginosa phosphorylcholine phosphatase.</title>
        <authorList>
            <person name="Otero L.H."/>
            <person name="Beassoni P.R."/>
            <person name="Lisa A.T."/>
            <person name="Domenech C.E."/>
        </authorList>
    </citation>
    <scope>COFACTOR</scope>
    <scope>ACTIVITY REGULATION</scope>
</reference>
<reference key="11">
    <citation type="journal article" date="2010" name="Acta Crystallogr. F">
        <title>Crystallization and preliminary X-ray diffraction analysis of Pseudomonas aeruginosa phosphorylcholine phosphatase.</title>
        <authorList>
            <person name="Otero L.H."/>
            <person name="Beassoni P.R."/>
            <person name="Domenech C.E."/>
            <person name="Lisa A.T."/>
            <person name="Albert A."/>
        </authorList>
    </citation>
    <scope>SUBUNIT</scope>
    <scope>CRYSTALLIZATION</scope>
</reference>
<reference key="12">
    <citation type="journal article" date="2011" name="Microbiol. Res.">
        <title>Choline catabolism, sigma54 factor and NtrC are required for the full expression of the Pseudomonas aeruginosa phosphorylcholine phosphatase gene.</title>
        <authorList>
            <person name="Massimelli M.J."/>
            <person name="Sanchez D.G."/>
            <person name="Buchieri M.V."/>
            <person name="Olvera L."/>
            <person name="Beassoni P.R."/>
            <person name="Schweizer H.P."/>
            <person name="Morett E."/>
            <person name="Lisa A.T."/>
        </authorList>
    </citation>
    <scope>INDUCTION</scope>
    <source>
        <strain>ATCC 15692 / DSM 22644 / CIP 104116 / JCM 14847 / LMG 12228 / 1C / PRS 101 / PAO1</strain>
    </source>
</reference>
<reference key="13">
    <citation type="journal article" date="2011" name="Biochim. Biophys. Acta">
        <title>Site-directed mutations and kinetic studies show key residues involved in alkylammonium interactions and reveal two sites for phosphorylcholine in Pseudomonas aeruginosa phosphorylcholine phosphatase.</title>
        <authorList>
            <person name="Beassoni P.R."/>
            <person name="Otero L.H."/>
            <person name="Boetsch C."/>
            <person name="Domenech C.E."/>
            <person name="Gonzalez-Nilo F.D."/>
            <person name="Lisa A.T."/>
        </authorList>
    </citation>
    <scope>ACTIVITY REGULATION</scope>
    <scope>DOMAIN</scope>
    <scope>MUTAGENESIS OF GLU-64; GLU-65 AND 104-TYR--TYR-106</scope>
</reference>
<reference key="14">
    <citation type="journal article" date="2011" name="Enzyme Res.">
        <title>Different effects of Mg and Zn on the two sites for alkylammonium compounds in Pseudomonas aeruginosa phosphorylcholine phosphatase.</title>
        <authorList>
            <person name="Otero L.H."/>
            <person name="Beassoni P.R."/>
            <person name="Boetsch C."/>
            <person name="Lisa A.T."/>
            <person name="Domenech C.E."/>
        </authorList>
    </citation>
    <scope>ACTIVITY REGULATION</scope>
    <scope>DOMAIN</scope>
</reference>
<reference key="15">
    <citation type="journal article" date="2011" name="Enzyme Res.">
        <title>Phosphorylcholine phosphatase: a peculiar enzyme of Pseudomonas aeruginosa.</title>
        <authorList>
            <person name="Domenech C.E."/>
            <person name="Otero L.H."/>
            <person name="Beassoni P.R."/>
            <person name="Lisa A.T."/>
        </authorList>
    </citation>
    <scope>REVIEW</scope>
</reference>
<reference evidence="21 22" key="16">
    <citation type="journal article" date="2012" name="J. Mol. Biol.">
        <title>The structural domains of Pseudomonas aeruginosa phosphorylcholine phosphatase cooperate in substrate hydrolysis: 3D structure and enzymatic mechanism.</title>
        <authorList>
            <person name="Infantes L."/>
            <person name="Otero L.H."/>
            <person name="Beassoni P.R."/>
            <person name="Boetsch C."/>
            <person name="Lisa A.T."/>
            <person name="Domenech C.E."/>
            <person name="Albert A."/>
        </authorList>
    </citation>
    <scope>X-RAY CRYSTALLOGRAPHY (2.12 ANGSTROMS) OF 23-349 IN COMPLEX WITH MAGNESIUM</scope>
    <scope>DISULFIDE BONDS</scope>
    <scope>COFACTOR</scope>
    <scope>SUBUNIT</scope>
    <scope>DOMAIN</scope>
    <scope>MUTAGENESIS OF THR-57; GLU-64; GLU-65; 104-TYR--TYR-106; CYS-109; SER-188; LYS-264; GLY-283; ASP-284 AND ASP-289</scope>
</reference>
<sequence>MTFAKGILAALALAAAVGQASATELEHWPAPAARQLNALIEANANKGAYAVFDMDNTSYRYDLEESLLPYLEMKGVLTRDRLDPSLKLIPFKDQAGHKESLFSYYYRLCEIDDMVCYPWVAQVFSGFTLRELKGYVDELMAYGKPIPATYYDGDKLATLDVEPPRVFSGQRELYNKLMENGIEVYVISAAHEELVRMVAADPRYGYNAKPENVIGVTTLLKNRKTGELTTARKQIAEGKYDPKANLDLEVTPYLWTPATWMAGKQAAILTYIDRWKRPILVAGDTPDSDGYMLFNGTAENGVHLWVNRKAKYMEQINGMIKQHSAAQAKAGLPVTADRNWVIVTPEQIQ</sequence>
<keyword id="KW-0002">3D-structure</keyword>
<keyword id="KW-1015">Disulfide bond</keyword>
<keyword id="KW-0378">Hydrolase</keyword>
<keyword id="KW-0460">Magnesium</keyword>
<keyword id="KW-0479">Metal-binding</keyword>
<keyword id="KW-0574">Periplasm</keyword>
<keyword id="KW-1185">Reference proteome</keyword>
<keyword id="KW-0732">Signal</keyword>
<keyword id="KW-0843">Virulence</keyword>
<proteinExistence type="evidence at protein level"/>